<evidence type="ECO:0000250" key="1"/>
<evidence type="ECO:0000250" key="2">
    <source>
        <dbReference type="UniProtKB" id="A2RIB7"/>
    </source>
</evidence>
<evidence type="ECO:0000250" key="3">
    <source>
        <dbReference type="UniProtKB" id="P37062"/>
    </source>
</evidence>
<evidence type="ECO:0000250" key="4">
    <source>
        <dbReference type="UniProtKB" id="Q5XC60"/>
    </source>
</evidence>
<evidence type="ECO:0000305" key="5"/>
<sequence length="479" mass="52875">MKKVIVIGVNHAGTSFIRTLLSKSKDFQVNAYDRNTNISFLGCGIALAVSGVVKNTEDLFYSTPEELKAMGANVFMAHDVVGLDLDKKQVIVKDLATGKETVDHYDQLVVASGAWPICMNVENEVTHTQLQFNHTDKYCGNIKNLISCKLYQHALTLIDSFRHDKSIKSVAIVGSGYIGLELAEAAWQCGKQVTVIDMLDKPAGNNFDEEFTNELEKAMKKAGINLMMGSAVKGFIVDADKNVVKGVETDKGRVDADLVIQSIGFRPNTQFVPKDRQFEFNRNGSIKVNEYLQALNHENVYVIGGAAAIYDAASEQYENIDLATNAVKSGLVAAMHMIGSKAVKLESIVGTNALHVFGLNLAATGLTEKRAKMNGFDVGVSIVDDNDRPEFMGTFDKVRFKLIYDKKTLRLLGAQLLSWNTNHSEIIFYIALAVQKKMLISELGLVDVYFLPHYNKPFNFVLAAVLQALGFSYYTPKNK</sequence>
<gene>
    <name type="primary">nox</name>
    <name type="ordered locus">MPN_394</name>
    <name type="ORF">MP444</name>
</gene>
<dbReference type="EC" id="1.6.3.4" evidence="2"/>
<dbReference type="EMBL" id="U00089">
    <property type="protein sequence ID" value="AAB96092.1"/>
    <property type="molecule type" value="Genomic_DNA"/>
</dbReference>
<dbReference type="PIR" id="S73770">
    <property type="entry name" value="S73770"/>
</dbReference>
<dbReference type="RefSeq" id="NP_110082.1">
    <property type="nucleotide sequence ID" value="NC_000912.1"/>
</dbReference>
<dbReference type="RefSeq" id="WP_010874750.1">
    <property type="nucleotide sequence ID" value="NZ_OU342337.1"/>
</dbReference>
<dbReference type="SMR" id="P75389"/>
<dbReference type="IntAct" id="P75389">
    <property type="interactions" value="2"/>
</dbReference>
<dbReference type="STRING" id="272634.MPN_394"/>
<dbReference type="EnsemblBacteria" id="AAB96092">
    <property type="protein sequence ID" value="AAB96092"/>
    <property type="gene ID" value="MPN_394"/>
</dbReference>
<dbReference type="KEGG" id="mpn:MPN_394"/>
<dbReference type="PATRIC" id="fig|272634.6.peg.425"/>
<dbReference type="HOGENOM" id="CLU_003291_1_0_14"/>
<dbReference type="OrthoDB" id="9792592at2"/>
<dbReference type="BioCyc" id="MPNE272634:G1GJ3-626-MONOMER"/>
<dbReference type="Proteomes" id="UP000000808">
    <property type="component" value="Chromosome"/>
</dbReference>
<dbReference type="GO" id="GO:0008137">
    <property type="term" value="F:NADH dehydrogenase (ubiquinone) activity"/>
    <property type="evidence" value="ECO:0007669"/>
    <property type="project" value="UniProtKB-EC"/>
</dbReference>
<dbReference type="Gene3D" id="3.30.390.30">
    <property type="match status" value="1"/>
</dbReference>
<dbReference type="Gene3D" id="3.50.50.60">
    <property type="entry name" value="FAD/NAD(P)-binding domain"/>
    <property type="match status" value="2"/>
</dbReference>
<dbReference type="InterPro" id="IPR050260">
    <property type="entry name" value="FAD-bd_OxRdtase"/>
</dbReference>
<dbReference type="InterPro" id="IPR036188">
    <property type="entry name" value="FAD/NAD-bd_sf"/>
</dbReference>
<dbReference type="InterPro" id="IPR023753">
    <property type="entry name" value="FAD/NAD-binding_dom"/>
</dbReference>
<dbReference type="InterPro" id="IPR016156">
    <property type="entry name" value="FAD/NAD-linked_Rdtase_dimer_sf"/>
</dbReference>
<dbReference type="InterPro" id="IPR004099">
    <property type="entry name" value="Pyr_nucl-diS_OxRdtase_dimer"/>
</dbReference>
<dbReference type="PANTHER" id="PTHR43429:SF1">
    <property type="entry name" value="NAD(P)H SULFUR OXIDOREDUCTASE (COA-DEPENDENT)"/>
    <property type="match status" value="1"/>
</dbReference>
<dbReference type="PANTHER" id="PTHR43429">
    <property type="entry name" value="PYRIDINE NUCLEOTIDE-DISULFIDE OXIDOREDUCTASE DOMAIN-CONTAINING"/>
    <property type="match status" value="1"/>
</dbReference>
<dbReference type="Pfam" id="PF07992">
    <property type="entry name" value="Pyr_redox_2"/>
    <property type="match status" value="1"/>
</dbReference>
<dbReference type="Pfam" id="PF02852">
    <property type="entry name" value="Pyr_redox_dim"/>
    <property type="match status" value="1"/>
</dbReference>
<dbReference type="PRINTS" id="PR00368">
    <property type="entry name" value="FADPNR"/>
</dbReference>
<dbReference type="SUPFAM" id="SSF51905">
    <property type="entry name" value="FAD/NAD(P)-binding domain"/>
    <property type="match status" value="1"/>
</dbReference>
<dbReference type="SUPFAM" id="SSF55424">
    <property type="entry name" value="FAD/NAD-linked reductases, dimerisation (C-terminal) domain"/>
    <property type="match status" value="1"/>
</dbReference>
<proteinExistence type="inferred from homology"/>
<organism>
    <name type="scientific">Mycoplasma pneumoniae (strain ATCC 29342 / M129 / Subtype 1)</name>
    <name type="common">Mycoplasmoides pneumoniae</name>
    <dbReference type="NCBI Taxonomy" id="272634"/>
    <lineage>
        <taxon>Bacteria</taxon>
        <taxon>Bacillati</taxon>
        <taxon>Mycoplasmatota</taxon>
        <taxon>Mycoplasmoidales</taxon>
        <taxon>Mycoplasmoidaceae</taxon>
        <taxon>Mycoplasmoides</taxon>
    </lineage>
</organism>
<feature type="chain" id="PRO_0000184703" description="NADH oxidase">
    <location>
        <begin position="1"/>
        <end position="479"/>
    </location>
</feature>
<feature type="active site" description="Proton acceptor" evidence="3">
    <location>
        <position position="11"/>
    </location>
</feature>
<feature type="active site" description="Redox-active">
    <location>
        <position position="43"/>
    </location>
</feature>
<feature type="binding site" evidence="1">
    <location>
        <begin position="8"/>
        <end position="12"/>
    </location>
    <ligand>
        <name>FAD</name>
        <dbReference type="ChEBI" id="CHEBI:57692"/>
    </ligand>
</feature>
<feature type="binding site" evidence="4">
    <location>
        <position position="33"/>
    </location>
    <ligand>
        <name>FAD</name>
        <dbReference type="ChEBI" id="CHEBI:57692"/>
    </ligand>
</feature>
<feature type="binding site" evidence="4">
    <location>
        <position position="43"/>
    </location>
    <ligand>
        <name>FAD</name>
        <dbReference type="ChEBI" id="CHEBI:57692"/>
    </ligand>
</feature>
<feature type="binding site" evidence="4">
    <location>
        <position position="80"/>
    </location>
    <ligand>
        <name>FAD</name>
        <dbReference type="ChEBI" id="CHEBI:57692"/>
    </ligand>
</feature>
<feature type="binding site" evidence="1">
    <location>
        <begin position="111"/>
        <end position="114"/>
    </location>
    <ligand>
        <name>FAD</name>
        <dbReference type="ChEBI" id="CHEBI:57692"/>
    </ligand>
</feature>
<feature type="binding site" evidence="4">
    <location>
        <position position="149"/>
    </location>
    <ligand>
        <name>FAD</name>
        <dbReference type="ChEBI" id="CHEBI:57692"/>
    </ligand>
</feature>
<feature type="binding site" evidence="1">
    <location>
        <begin position="170"/>
        <end position="185"/>
    </location>
    <ligand>
        <name>NAD(+)</name>
        <dbReference type="ChEBI" id="CHEBI:57540"/>
    </ligand>
</feature>
<feature type="binding site" evidence="4">
    <location>
        <position position="177"/>
    </location>
    <ligand>
        <name>FAD</name>
        <dbReference type="ChEBI" id="CHEBI:57692"/>
    </ligand>
</feature>
<feature type="binding site" evidence="3">
    <location>
        <position position="197"/>
    </location>
    <ligand>
        <name>NAD(+)</name>
        <dbReference type="ChEBI" id="CHEBI:57540"/>
    </ligand>
</feature>
<feature type="binding site" evidence="3">
    <location>
        <position position="264"/>
    </location>
    <ligand>
        <name>NAD(+)</name>
        <dbReference type="ChEBI" id="CHEBI:57540"/>
    </ligand>
</feature>
<feature type="binding site" evidence="1">
    <location>
        <begin position="295"/>
        <end position="305"/>
    </location>
    <ligand>
        <name>FAD</name>
        <dbReference type="ChEBI" id="CHEBI:57692"/>
    </ligand>
</feature>
<feature type="binding site" evidence="4">
    <location>
        <position position="322"/>
    </location>
    <ligand>
        <name>FAD</name>
        <dbReference type="ChEBI" id="CHEBI:57692"/>
    </ligand>
</feature>
<feature type="binding site" evidence="4">
    <location>
        <position position="323"/>
    </location>
    <ligand>
        <name>FAD</name>
        <dbReference type="ChEBI" id="CHEBI:57692"/>
    </ligand>
</feature>
<feature type="binding site" evidence="4">
    <location>
        <position position="324"/>
    </location>
    <ligand>
        <name>FAD</name>
        <dbReference type="ChEBI" id="CHEBI:57692"/>
    </ligand>
</feature>
<feature type="binding site" evidence="3">
    <location>
        <position position="353"/>
    </location>
    <ligand>
        <name>NAD(+)</name>
        <dbReference type="ChEBI" id="CHEBI:57540"/>
    </ligand>
</feature>
<feature type="binding site" evidence="4">
    <location>
        <position position="450"/>
    </location>
    <ligand>
        <name>FAD</name>
        <dbReference type="ChEBI" id="CHEBI:57692"/>
    </ligand>
</feature>
<feature type="modified residue" description="Cysteine sulfinic acid (-SO2H)" evidence="4">
    <location>
        <position position="43"/>
    </location>
</feature>
<name>NAOX_MYCPN</name>
<comment type="function">
    <text evidence="1">Catalyzes the four-electron reduction of molecular oxygen to water.</text>
</comment>
<comment type="catalytic activity">
    <molecule>NADH oxidase</molecule>
    <reaction evidence="2">
        <text>2 NADH + O2 + 2 H(+) = 2 NAD(+) + 2 H2O</text>
        <dbReference type="Rhea" id="RHEA:37799"/>
        <dbReference type="ChEBI" id="CHEBI:15377"/>
        <dbReference type="ChEBI" id="CHEBI:15378"/>
        <dbReference type="ChEBI" id="CHEBI:15379"/>
        <dbReference type="ChEBI" id="CHEBI:57540"/>
        <dbReference type="ChEBI" id="CHEBI:57945"/>
        <dbReference type="EC" id="1.6.3.4"/>
    </reaction>
</comment>
<comment type="cofactor">
    <cofactor evidence="1">
        <name>FAD</name>
        <dbReference type="ChEBI" id="CHEBI:57692"/>
    </cofactor>
    <text evidence="1">Binds 1 FAD per subunit.</text>
</comment>
<comment type="similarity">
    <text evidence="5">Belongs to the class-III pyridine nucleotide-disulfide oxidoreductase family.</text>
</comment>
<accession>P75389</accession>
<protein>
    <recommendedName>
        <fullName>NADH oxidase</fullName>
        <shortName>NOXase</shortName>
        <ecNumber evidence="2">1.6.3.4</ecNumber>
    </recommendedName>
</protein>
<keyword id="KW-0274">FAD</keyword>
<keyword id="KW-0285">Flavoprotein</keyword>
<keyword id="KW-0520">NAD</keyword>
<keyword id="KW-0558">Oxidation</keyword>
<keyword id="KW-0560">Oxidoreductase</keyword>
<keyword id="KW-0676">Redox-active center</keyword>
<keyword id="KW-1185">Reference proteome</keyword>
<reference key="1">
    <citation type="journal article" date="1996" name="Nucleic Acids Res.">
        <title>Complete sequence analysis of the genome of the bacterium Mycoplasma pneumoniae.</title>
        <authorList>
            <person name="Himmelreich R."/>
            <person name="Hilbert H."/>
            <person name="Plagens H."/>
            <person name="Pirkl E."/>
            <person name="Li B.-C."/>
            <person name="Herrmann R."/>
        </authorList>
    </citation>
    <scope>NUCLEOTIDE SEQUENCE [LARGE SCALE GENOMIC DNA]</scope>
    <source>
        <strain>ATCC 29342 / M129 / Subtype 1</strain>
    </source>
</reference>